<protein>
    <recommendedName>
        <fullName>NADH dehydrogenase [ubiquinone] 1 alpha subcomplex subunit 4 homolog</fullName>
    </recommendedName>
</protein>
<keyword id="KW-0249">Electron transport</keyword>
<keyword id="KW-0472">Membrane</keyword>
<keyword id="KW-0496">Mitochondrion</keyword>
<keyword id="KW-0999">Mitochondrion inner membrane</keyword>
<keyword id="KW-1185">Reference proteome</keyword>
<keyword id="KW-0679">Respiratory chain</keyword>
<keyword id="KW-0812">Transmembrane</keyword>
<keyword id="KW-1133">Transmembrane helix</keyword>
<keyword id="KW-0813">Transport</keyword>
<accession>G2TRT6</accession>
<proteinExistence type="inferred from homology"/>
<dbReference type="EMBL" id="CU329672">
    <property type="protein sequence ID" value="CCD31398.1"/>
    <property type="molecule type" value="Genomic_DNA"/>
</dbReference>
<dbReference type="RefSeq" id="XP_004001752.1">
    <property type="nucleotide sequence ID" value="XM_004001703.1"/>
</dbReference>
<dbReference type="SMR" id="G2TRT6"/>
<dbReference type="PaxDb" id="4896-SPCC417.16.1"/>
<dbReference type="EnsemblFungi" id="SPCC417.16.1">
    <property type="protein sequence ID" value="SPCC417.16.1:pep"/>
    <property type="gene ID" value="SPCC417.16"/>
</dbReference>
<dbReference type="PomBase" id="SPCC417.16"/>
<dbReference type="VEuPathDB" id="FungiDB:SPCC417.16"/>
<dbReference type="HOGENOM" id="CLU_214587_0_0_1"/>
<dbReference type="InParanoid" id="G2TRT6"/>
<dbReference type="OMA" id="KIPMELM"/>
<dbReference type="PRO" id="PR:G2TRT6"/>
<dbReference type="Proteomes" id="UP000002485">
    <property type="component" value="Chromosome III"/>
</dbReference>
<dbReference type="GO" id="GO:0005743">
    <property type="term" value="C:mitochondrial inner membrane"/>
    <property type="evidence" value="ECO:0000250"/>
    <property type="project" value="PomBase"/>
</dbReference>
<dbReference type="GO" id="GO:0017004">
    <property type="term" value="P:cytochrome complex assembly"/>
    <property type="evidence" value="ECO:0000266"/>
    <property type="project" value="PomBase"/>
</dbReference>
<dbReference type="InterPro" id="IPR010530">
    <property type="entry name" value="B12D"/>
</dbReference>
<dbReference type="Pfam" id="PF06522">
    <property type="entry name" value="B12D"/>
    <property type="match status" value="1"/>
</dbReference>
<comment type="function">
    <text evidence="1">Accessory subunit of the mitochondrial membrane respiratory chain NADH dehydrogenase (Complex I), that is believed to be not involved in catalysis. Complex I functions in the transfer of electrons from NADH to the respiratory chain. The immediate electron acceptor for the enzyme is believed to be ubiquinone (By similarity).</text>
</comment>
<comment type="subcellular location">
    <subcellularLocation>
        <location evidence="1">Mitochondrion inner membrane</location>
    </subcellularLocation>
</comment>
<comment type="similarity">
    <text evidence="3">Belongs to the complex I NDUFA4 subunit family.</text>
</comment>
<name>NDUA4_SCHPO</name>
<feature type="chain" id="PRO_0000416672" description="NADH dehydrogenase [ubiquinone] 1 alpha subcomplex subunit 4 homolog">
    <location>
        <begin position="1"/>
        <end position="52"/>
    </location>
</feature>
<feature type="transmembrane region" description="Helical" evidence="2">
    <location>
        <begin position="14"/>
        <end position="30"/>
    </location>
</feature>
<reference key="1">
    <citation type="journal article" date="2002" name="Nature">
        <title>The genome sequence of Schizosaccharomyces pombe.</title>
        <authorList>
            <person name="Wood V."/>
            <person name="Gwilliam R."/>
            <person name="Rajandream M.A."/>
            <person name="Lyne M.H."/>
            <person name="Lyne R."/>
            <person name="Stewart A."/>
            <person name="Sgouros J.G."/>
            <person name="Peat N."/>
            <person name="Hayles J."/>
            <person name="Baker S.G."/>
            <person name="Basham D."/>
            <person name="Bowman S."/>
            <person name="Brooks K."/>
            <person name="Brown D."/>
            <person name="Brown S."/>
            <person name="Chillingworth T."/>
            <person name="Churcher C.M."/>
            <person name="Collins M."/>
            <person name="Connor R."/>
            <person name="Cronin A."/>
            <person name="Davis P."/>
            <person name="Feltwell T."/>
            <person name="Fraser A."/>
            <person name="Gentles S."/>
            <person name="Goble A."/>
            <person name="Hamlin N."/>
            <person name="Harris D.E."/>
            <person name="Hidalgo J."/>
            <person name="Hodgson G."/>
            <person name="Holroyd S."/>
            <person name="Hornsby T."/>
            <person name="Howarth S."/>
            <person name="Huckle E.J."/>
            <person name="Hunt S."/>
            <person name="Jagels K."/>
            <person name="James K.D."/>
            <person name="Jones L."/>
            <person name="Jones M."/>
            <person name="Leather S."/>
            <person name="McDonald S."/>
            <person name="McLean J."/>
            <person name="Mooney P."/>
            <person name="Moule S."/>
            <person name="Mungall K.L."/>
            <person name="Murphy L.D."/>
            <person name="Niblett D."/>
            <person name="Odell C."/>
            <person name="Oliver K."/>
            <person name="O'Neil S."/>
            <person name="Pearson D."/>
            <person name="Quail M.A."/>
            <person name="Rabbinowitsch E."/>
            <person name="Rutherford K.M."/>
            <person name="Rutter S."/>
            <person name="Saunders D."/>
            <person name="Seeger K."/>
            <person name="Sharp S."/>
            <person name="Skelton J."/>
            <person name="Simmonds M.N."/>
            <person name="Squares R."/>
            <person name="Squares S."/>
            <person name="Stevens K."/>
            <person name="Taylor K."/>
            <person name="Taylor R.G."/>
            <person name="Tivey A."/>
            <person name="Walsh S.V."/>
            <person name="Warren T."/>
            <person name="Whitehead S."/>
            <person name="Woodward J.R."/>
            <person name="Volckaert G."/>
            <person name="Aert R."/>
            <person name="Robben J."/>
            <person name="Grymonprez B."/>
            <person name="Weltjens I."/>
            <person name="Vanstreels E."/>
            <person name="Rieger M."/>
            <person name="Schaefer M."/>
            <person name="Mueller-Auer S."/>
            <person name="Gabel C."/>
            <person name="Fuchs M."/>
            <person name="Duesterhoeft A."/>
            <person name="Fritzc C."/>
            <person name="Holzer E."/>
            <person name="Moestl D."/>
            <person name="Hilbert H."/>
            <person name="Borzym K."/>
            <person name="Langer I."/>
            <person name="Beck A."/>
            <person name="Lehrach H."/>
            <person name="Reinhardt R."/>
            <person name="Pohl T.M."/>
            <person name="Eger P."/>
            <person name="Zimmermann W."/>
            <person name="Wedler H."/>
            <person name="Wambutt R."/>
            <person name="Purnelle B."/>
            <person name="Goffeau A."/>
            <person name="Cadieu E."/>
            <person name="Dreano S."/>
            <person name="Gloux S."/>
            <person name="Lelaure V."/>
            <person name="Mottier S."/>
            <person name="Galibert F."/>
            <person name="Aves S.J."/>
            <person name="Xiang Z."/>
            <person name="Hunt C."/>
            <person name="Moore K."/>
            <person name="Hurst S.M."/>
            <person name="Lucas M."/>
            <person name="Rochet M."/>
            <person name="Gaillardin C."/>
            <person name="Tallada V.A."/>
            <person name="Garzon A."/>
            <person name="Thode G."/>
            <person name="Daga R.R."/>
            <person name="Cruzado L."/>
            <person name="Jimenez J."/>
            <person name="Sanchez M."/>
            <person name="del Rey F."/>
            <person name="Benito J."/>
            <person name="Dominguez A."/>
            <person name="Revuelta J.L."/>
            <person name="Moreno S."/>
            <person name="Armstrong J."/>
            <person name="Forsburg S.L."/>
            <person name="Cerutti L."/>
            <person name="Lowe T."/>
            <person name="McCombie W.R."/>
            <person name="Paulsen I."/>
            <person name="Potashkin J."/>
            <person name="Shpakovski G.V."/>
            <person name="Ussery D."/>
            <person name="Barrell B.G."/>
            <person name="Nurse P."/>
        </authorList>
    </citation>
    <scope>NUCLEOTIDE SEQUENCE [LARGE SCALE GENOMIC DNA]</scope>
    <source>
        <strain>972 / ATCC 24843</strain>
    </source>
</reference>
<reference key="2">
    <citation type="journal article" date="2011" name="Science">
        <title>Comparative functional genomics of the fission yeasts.</title>
        <authorList>
            <person name="Rhind N."/>
            <person name="Chen Z."/>
            <person name="Yassour M."/>
            <person name="Thompson D.A."/>
            <person name="Haas B.J."/>
            <person name="Habib N."/>
            <person name="Wapinski I."/>
            <person name="Roy S."/>
            <person name="Lin M.F."/>
            <person name="Heiman D.I."/>
            <person name="Young S.K."/>
            <person name="Furuya K."/>
            <person name="Guo Y."/>
            <person name="Pidoux A."/>
            <person name="Chen H.M."/>
            <person name="Robbertse B."/>
            <person name="Goldberg J.M."/>
            <person name="Aoki K."/>
            <person name="Bayne E.H."/>
            <person name="Berlin A.M."/>
            <person name="Desjardins C.A."/>
            <person name="Dobbs E."/>
            <person name="Dukaj L."/>
            <person name="Fan L."/>
            <person name="FitzGerald M.G."/>
            <person name="French C."/>
            <person name="Gujja S."/>
            <person name="Hansen K."/>
            <person name="Keifenheim D."/>
            <person name="Levin J.Z."/>
            <person name="Mosher R.A."/>
            <person name="Mueller C.A."/>
            <person name="Pfiffner J."/>
            <person name="Priest M."/>
            <person name="Russ C."/>
            <person name="Smialowska A."/>
            <person name="Swoboda P."/>
            <person name="Sykes S.M."/>
            <person name="Vaughn M."/>
            <person name="Vengrova S."/>
            <person name="Yoder R."/>
            <person name="Zeng Q."/>
            <person name="Allshire R."/>
            <person name="Baulcombe D."/>
            <person name="Birren B.W."/>
            <person name="Brown W."/>
            <person name="Ekwall K."/>
            <person name="Kellis M."/>
            <person name="Leatherwood J."/>
            <person name="Levin H."/>
            <person name="Margalit H."/>
            <person name="Martienssen R."/>
            <person name="Nieduszynski C.A."/>
            <person name="Spatafora J.W."/>
            <person name="Friedman N."/>
            <person name="Dalgaard J.Z."/>
            <person name="Baumann P."/>
            <person name="Niki H."/>
            <person name="Regev A."/>
            <person name="Nusbaum C."/>
        </authorList>
    </citation>
    <scope>IDENTIFICATION</scope>
</reference>
<gene>
    <name type="ORF">SPCC417.16</name>
</gene>
<sequence>MPFRAALRKVPVELYPLGAAVATAVGFATYSMGKKLLADPNVHIDPTVRRTI</sequence>
<evidence type="ECO:0000250" key="1"/>
<evidence type="ECO:0000255" key="2"/>
<evidence type="ECO:0000305" key="3"/>
<organism>
    <name type="scientific">Schizosaccharomyces pombe (strain 972 / ATCC 24843)</name>
    <name type="common">Fission yeast</name>
    <dbReference type="NCBI Taxonomy" id="284812"/>
    <lineage>
        <taxon>Eukaryota</taxon>
        <taxon>Fungi</taxon>
        <taxon>Dikarya</taxon>
        <taxon>Ascomycota</taxon>
        <taxon>Taphrinomycotina</taxon>
        <taxon>Schizosaccharomycetes</taxon>
        <taxon>Schizosaccharomycetales</taxon>
        <taxon>Schizosaccharomycetaceae</taxon>
        <taxon>Schizosaccharomyces</taxon>
    </lineage>
</organism>